<name>ADS1_ARATH</name>
<dbReference type="EC" id="1.14.19.-" evidence="4"/>
<dbReference type="EMBL" id="D88536">
    <property type="protein sequence ID" value="BAA25180.1"/>
    <property type="molecule type" value="mRNA"/>
</dbReference>
<dbReference type="EMBL" id="AC024174">
    <property type="protein sequence ID" value="AAF80131.1"/>
    <property type="molecule type" value="Genomic_DNA"/>
</dbReference>
<dbReference type="EMBL" id="CP002684">
    <property type="protein sequence ID" value="AEE27937.1"/>
    <property type="molecule type" value="Genomic_DNA"/>
</dbReference>
<dbReference type="EMBL" id="AK119146">
    <property type="protein sequence ID" value="BAC43716.1"/>
    <property type="molecule type" value="mRNA"/>
</dbReference>
<dbReference type="EMBL" id="AF332433">
    <property type="protein sequence ID" value="AAG48796.1"/>
    <property type="molecule type" value="mRNA"/>
</dbReference>
<dbReference type="PIR" id="T52111">
    <property type="entry name" value="T52111"/>
</dbReference>
<dbReference type="RefSeq" id="NP_172098.1">
    <property type="nucleotide sequence ID" value="NM_100489.4"/>
</dbReference>
<dbReference type="SMR" id="O65797"/>
<dbReference type="FunCoup" id="O65797">
    <property type="interactions" value="299"/>
</dbReference>
<dbReference type="STRING" id="3702.O65797"/>
<dbReference type="PaxDb" id="3702-AT1G06080.1"/>
<dbReference type="ProteomicsDB" id="244737"/>
<dbReference type="EnsemblPlants" id="AT1G06080.1">
    <property type="protein sequence ID" value="AT1G06080.1"/>
    <property type="gene ID" value="AT1G06080"/>
</dbReference>
<dbReference type="GeneID" id="837117"/>
<dbReference type="Gramene" id="AT1G06080.1">
    <property type="protein sequence ID" value="AT1G06080.1"/>
    <property type="gene ID" value="AT1G06080"/>
</dbReference>
<dbReference type="KEGG" id="ath:AT1G06080"/>
<dbReference type="Araport" id="AT1G06080"/>
<dbReference type="TAIR" id="AT1G06080">
    <property type="gene designation" value="ADS1"/>
</dbReference>
<dbReference type="eggNOG" id="KOG1600">
    <property type="taxonomic scope" value="Eukaryota"/>
</dbReference>
<dbReference type="HOGENOM" id="CLU_027359_1_0_1"/>
<dbReference type="InParanoid" id="O65797"/>
<dbReference type="OMA" id="IGWAYEL"/>
<dbReference type="PhylomeDB" id="O65797"/>
<dbReference type="BioCyc" id="ARA:AT1G06080-MONOMER"/>
<dbReference type="UniPathway" id="UPA00658"/>
<dbReference type="PRO" id="PR:O65797"/>
<dbReference type="Proteomes" id="UP000006548">
    <property type="component" value="Chromosome 1"/>
</dbReference>
<dbReference type="ExpressionAtlas" id="O65797">
    <property type="expression patterns" value="baseline and differential"/>
</dbReference>
<dbReference type="GO" id="GO:0031969">
    <property type="term" value="C:chloroplast membrane"/>
    <property type="evidence" value="ECO:0007669"/>
    <property type="project" value="UniProtKB-SubCell"/>
</dbReference>
<dbReference type="GO" id="GO:0005789">
    <property type="term" value="C:endoplasmic reticulum membrane"/>
    <property type="evidence" value="ECO:0000314"/>
    <property type="project" value="TAIR"/>
</dbReference>
<dbReference type="GO" id="GO:0046872">
    <property type="term" value="F:metal ion binding"/>
    <property type="evidence" value="ECO:0007669"/>
    <property type="project" value="UniProtKB-KW"/>
</dbReference>
<dbReference type="GO" id="GO:0016717">
    <property type="term" value="F:oxidoreductase activity, acting on paired donors, with oxidation of a pair of donors resulting in the reduction of molecular oxygen to two molecules of water"/>
    <property type="evidence" value="ECO:0007669"/>
    <property type="project" value="InterPro"/>
</dbReference>
<dbReference type="GO" id="GO:0006636">
    <property type="term" value="P:unsaturated fatty acid biosynthetic process"/>
    <property type="evidence" value="ECO:0007669"/>
    <property type="project" value="UniProtKB-UniPathway"/>
</dbReference>
<dbReference type="GO" id="GO:0042761">
    <property type="term" value="P:very long-chain fatty acid biosynthetic process"/>
    <property type="evidence" value="ECO:0000315"/>
    <property type="project" value="TAIR"/>
</dbReference>
<dbReference type="CDD" id="cd03505">
    <property type="entry name" value="Delta9-FADS-like"/>
    <property type="match status" value="1"/>
</dbReference>
<dbReference type="InterPro" id="IPR015876">
    <property type="entry name" value="Acyl-CoA_DS"/>
</dbReference>
<dbReference type="InterPro" id="IPR005804">
    <property type="entry name" value="FA_desaturase_dom"/>
</dbReference>
<dbReference type="PANTHER" id="PTHR11351">
    <property type="entry name" value="ACYL-COA DESATURASE"/>
    <property type="match status" value="1"/>
</dbReference>
<dbReference type="PANTHER" id="PTHR11351:SF65">
    <property type="entry name" value="DELTA-9 ACYL-LIPID DESATURASE 1"/>
    <property type="match status" value="1"/>
</dbReference>
<dbReference type="Pfam" id="PF00487">
    <property type="entry name" value="FA_desaturase"/>
    <property type="match status" value="1"/>
</dbReference>
<dbReference type="PRINTS" id="PR00075">
    <property type="entry name" value="FACDDSATRASE"/>
</dbReference>
<accession>O65797</accession>
<accession>Q8GW15</accession>
<feature type="chain" id="PRO_0000185425" description="Delta-9 acyl-lipid desaturase 1">
    <location>
        <begin position="1"/>
        <end position="305"/>
    </location>
</feature>
<feature type="transmembrane region" description="Helical" evidence="2">
    <location>
        <begin position="39"/>
        <end position="59"/>
    </location>
</feature>
<feature type="transmembrane region" description="Helical" evidence="2">
    <location>
        <begin position="60"/>
        <end position="80"/>
    </location>
</feature>
<feature type="transmembrane region" description="Helical" evidence="2">
    <location>
        <begin position="180"/>
        <end position="200"/>
    </location>
</feature>
<feature type="transmembrane region" description="Helical" evidence="2">
    <location>
        <begin position="268"/>
        <end position="288"/>
    </location>
</feature>
<feature type="region of interest" description="Disordered" evidence="3">
    <location>
        <begin position="1"/>
        <end position="20"/>
    </location>
</feature>
<feature type="short sequence motif" description="Histidine box-1" evidence="1">
    <location>
        <begin position="83"/>
        <end position="88"/>
    </location>
</feature>
<feature type="short sequence motif" description="Histidine box-2" evidence="1">
    <location>
        <begin position="120"/>
        <end position="124"/>
    </location>
</feature>
<feature type="short sequence motif" description="Histidine box-3" evidence="1">
    <location>
        <begin position="252"/>
        <end position="256"/>
    </location>
</feature>
<feature type="binding site" evidence="1">
    <location>
        <position position="83"/>
    </location>
    <ligand>
        <name>Fe cation</name>
        <dbReference type="ChEBI" id="CHEBI:24875"/>
        <label>1</label>
    </ligand>
</feature>
<feature type="binding site" evidence="1">
    <location>
        <position position="88"/>
    </location>
    <ligand>
        <name>Fe cation</name>
        <dbReference type="ChEBI" id="CHEBI:24875"/>
        <label>1</label>
    </ligand>
</feature>
<feature type="binding site" evidence="1">
    <location>
        <position position="120"/>
    </location>
    <ligand>
        <name>Fe cation</name>
        <dbReference type="ChEBI" id="CHEBI:24875"/>
        <label>1</label>
    </ligand>
</feature>
<feature type="binding site" evidence="1">
    <location>
        <position position="123"/>
    </location>
    <ligand>
        <name>Fe cation</name>
        <dbReference type="ChEBI" id="CHEBI:24875"/>
        <label>2</label>
    </ligand>
</feature>
<feature type="binding site" evidence="1">
    <location>
        <position position="124"/>
    </location>
    <ligand>
        <name>Fe cation</name>
        <dbReference type="ChEBI" id="CHEBI:24875"/>
        <label>1</label>
    </ligand>
</feature>
<feature type="binding site" evidence="1">
    <location>
        <position position="223"/>
    </location>
    <ligand>
        <name>Fe cation</name>
        <dbReference type="ChEBI" id="CHEBI:24875"/>
        <label>2</label>
    </ligand>
</feature>
<feature type="binding site" evidence="1">
    <location>
        <position position="252"/>
    </location>
    <ligand>
        <name>Fe cation</name>
        <dbReference type="ChEBI" id="CHEBI:24875"/>
        <label>2</label>
    </ligand>
</feature>
<feature type="binding site" evidence="1">
    <location>
        <position position="255"/>
    </location>
    <ligand>
        <name>Fe cation</name>
        <dbReference type="ChEBI" id="CHEBI:24875"/>
        <label>1</label>
    </ligand>
</feature>
<feature type="binding site" evidence="1">
    <location>
        <position position="256"/>
    </location>
    <ligand>
        <name>Fe cation</name>
        <dbReference type="ChEBI" id="CHEBI:24875"/>
        <label>2</label>
    </ligand>
</feature>
<feature type="sequence conflict" description="In Ref. 4; BAC43716." evidence="10" ref="4">
    <original>L</original>
    <variation>R</variation>
    <location>
        <position position="154"/>
    </location>
</feature>
<keyword id="KW-0150">Chloroplast</keyword>
<keyword id="KW-0256">Endoplasmic reticulum</keyword>
<keyword id="KW-0275">Fatty acid biosynthesis</keyword>
<keyword id="KW-0276">Fatty acid metabolism</keyword>
<keyword id="KW-0408">Iron</keyword>
<keyword id="KW-0444">Lipid biosynthesis</keyword>
<keyword id="KW-0443">Lipid metabolism</keyword>
<keyword id="KW-0472">Membrane</keyword>
<keyword id="KW-0479">Metal-binding</keyword>
<keyword id="KW-0560">Oxidoreductase</keyword>
<keyword id="KW-0934">Plastid</keyword>
<keyword id="KW-1185">Reference proteome</keyword>
<keyword id="KW-0346">Stress response</keyword>
<keyword id="KW-0812">Transmembrane</keyword>
<keyword id="KW-1133">Transmembrane helix</keyword>
<organism>
    <name type="scientific">Arabidopsis thaliana</name>
    <name type="common">Mouse-ear cress</name>
    <dbReference type="NCBI Taxonomy" id="3702"/>
    <lineage>
        <taxon>Eukaryota</taxon>
        <taxon>Viridiplantae</taxon>
        <taxon>Streptophyta</taxon>
        <taxon>Embryophyta</taxon>
        <taxon>Tracheophyta</taxon>
        <taxon>Spermatophyta</taxon>
        <taxon>Magnoliopsida</taxon>
        <taxon>eudicotyledons</taxon>
        <taxon>Gunneridae</taxon>
        <taxon>Pentapetalae</taxon>
        <taxon>rosids</taxon>
        <taxon>malvids</taxon>
        <taxon>Brassicales</taxon>
        <taxon>Brassicaceae</taxon>
        <taxon>Camelineae</taxon>
        <taxon>Arabidopsis</taxon>
    </lineage>
</organism>
<evidence type="ECO:0000250" key="1">
    <source>
        <dbReference type="UniProtKB" id="O00767"/>
    </source>
</evidence>
<evidence type="ECO:0000255" key="2"/>
<evidence type="ECO:0000256" key="3">
    <source>
        <dbReference type="SAM" id="MobiDB-lite"/>
    </source>
</evidence>
<evidence type="ECO:0000269" key="4">
    <source>
    </source>
</evidence>
<evidence type="ECO:0000269" key="5">
    <source>
    </source>
</evidence>
<evidence type="ECO:0000269" key="6">
    <source>
    </source>
</evidence>
<evidence type="ECO:0000269" key="7">
    <source>
    </source>
</evidence>
<evidence type="ECO:0000269" key="8">
    <source>
    </source>
</evidence>
<evidence type="ECO:0000303" key="9">
    <source>
    </source>
</evidence>
<evidence type="ECO:0000305" key="10"/>
<evidence type="ECO:0000305" key="11">
    <source>
    </source>
</evidence>
<evidence type="ECO:0000305" key="12">
    <source>
    </source>
</evidence>
<evidence type="ECO:0000312" key="13">
    <source>
        <dbReference type="Araport" id="AT1G06080"/>
    </source>
</evidence>
<evidence type="ECO:0000312" key="14">
    <source>
        <dbReference type="EMBL" id="AAF80131.1"/>
    </source>
</evidence>
<sequence length="305" mass="36107">MSLSASEKEENNKKMAADKAEMGRKKRAMWERKWKRLDIVKAFASLFVHFLCLLAPFNFTWPALRVALIVYTVGGLGITVSYHRNLAHRSFKVPKWLEYFFAYCGLLAIQGDPIDWVSTHRYHHQFTDSDRDPHSPNEGFWFSHLLWLFDTGYLVEKCGRRTNVEDLKRQWYYKFLQRTVLYHILTFGFLLYYFGGLSFLTWGMGIGVAMEHHVTCLINSLCHVWGSRTWKTNDTSRNVWWLSVFSFGESWHNNHHAFESSARQGLEWWQIDISWYIVRFLEIIGLATDVKLPSESQRRRMAMVR</sequence>
<proteinExistence type="evidence at protein level"/>
<gene>
    <name evidence="9" type="primary">ADS1</name>
    <name evidence="13" type="ordered locus">At1g06080</name>
    <name evidence="14" type="ORF">T21E18.13</name>
</gene>
<reference key="1">
    <citation type="journal article" date="1998" name="Plant Cell Physiol.">
        <title>Characterization of delta 9 acyl-lipid desaturase homologues from Arabidopsis thaliana.</title>
        <authorList>
            <person name="Fukuchi-Mizutani M."/>
            <person name="Tasaka Y."/>
            <person name="Tanaka Y."/>
            <person name="Ashikari T."/>
            <person name="Kusumi T."/>
            <person name="Murata N."/>
        </authorList>
    </citation>
    <scope>NUCLEOTIDE SEQUENCE [MRNA]</scope>
    <scope>FUNCTION</scope>
    <scope>TISSUE SPECIFICITY</scope>
    <scope>INDUCTION</scope>
</reference>
<reference key="2">
    <citation type="journal article" date="2000" name="Nature">
        <title>Sequence and analysis of chromosome 1 of the plant Arabidopsis thaliana.</title>
        <authorList>
            <person name="Theologis A."/>
            <person name="Ecker J.R."/>
            <person name="Palm C.J."/>
            <person name="Federspiel N.A."/>
            <person name="Kaul S."/>
            <person name="White O."/>
            <person name="Alonso J."/>
            <person name="Altafi H."/>
            <person name="Araujo R."/>
            <person name="Bowman C.L."/>
            <person name="Brooks S.Y."/>
            <person name="Buehler E."/>
            <person name="Chan A."/>
            <person name="Chao Q."/>
            <person name="Chen H."/>
            <person name="Cheuk R.F."/>
            <person name="Chin C.W."/>
            <person name="Chung M.K."/>
            <person name="Conn L."/>
            <person name="Conway A.B."/>
            <person name="Conway A.R."/>
            <person name="Creasy T.H."/>
            <person name="Dewar K."/>
            <person name="Dunn P."/>
            <person name="Etgu P."/>
            <person name="Feldblyum T.V."/>
            <person name="Feng J.-D."/>
            <person name="Fong B."/>
            <person name="Fujii C.Y."/>
            <person name="Gill J.E."/>
            <person name="Goldsmith A.D."/>
            <person name="Haas B."/>
            <person name="Hansen N.F."/>
            <person name="Hughes B."/>
            <person name="Huizar L."/>
            <person name="Hunter J.L."/>
            <person name="Jenkins J."/>
            <person name="Johnson-Hopson C."/>
            <person name="Khan S."/>
            <person name="Khaykin E."/>
            <person name="Kim C.J."/>
            <person name="Koo H.L."/>
            <person name="Kremenetskaia I."/>
            <person name="Kurtz D.B."/>
            <person name="Kwan A."/>
            <person name="Lam B."/>
            <person name="Langin-Hooper S."/>
            <person name="Lee A."/>
            <person name="Lee J.M."/>
            <person name="Lenz C.A."/>
            <person name="Li J.H."/>
            <person name="Li Y.-P."/>
            <person name="Lin X."/>
            <person name="Liu S.X."/>
            <person name="Liu Z.A."/>
            <person name="Luros J.S."/>
            <person name="Maiti R."/>
            <person name="Marziali A."/>
            <person name="Militscher J."/>
            <person name="Miranda M."/>
            <person name="Nguyen M."/>
            <person name="Nierman W.C."/>
            <person name="Osborne B.I."/>
            <person name="Pai G."/>
            <person name="Peterson J."/>
            <person name="Pham P.K."/>
            <person name="Rizzo M."/>
            <person name="Rooney T."/>
            <person name="Rowley D."/>
            <person name="Sakano H."/>
            <person name="Salzberg S.L."/>
            <person name="Schwartz J.R."/>
            <person name="Shinn P."/>
            <person name="Southwick A.M."/>
            <person name="Sun H."/>
            <person name="Tallon L.J."/>
            <person name="Tambunga G."/>
            <person name="Toriumi M.J."/>
            <person name="Town C.D."/>
            <person name="Utterback T."/>
            <person name="Van Aken S."/>
            <person name="Vaysberg M."/>
            <person name="Vysotskaia V.S."/>
            <person name="Walker M."/>
            <person name="Wu D."/>
            <person name="Yu G."/>
            <person name="Fraser C.M."/>
            <person name="Venter J.C."/>
            <person name="Davis R.W."/>
        </authorList>
    </citation>
    <scope>NUCLEOTIDE SEQUENCE [LARGE SCALE GENOMIC DNA]</scope>
    <source>
        <strain>cv. Columbia</strain>
    </source>
</reference>
<reference key="3">
    <citation type="journal article" date="2017" name="Plant J.">
        <title>Araport11: a complete reannotation of the Arabidopsis thaliana reference genome.</title>
        <authorList>
            <person name="Cheng C.Y."/>
            <person name="Krishnakumar V."/>
            <person name="Chan A.P."/>
            <person name="Thibaud-Nissen F."/>
            <person name="Schobel S."/>
            <person name="Town C.D."/>
        </authorList>
    </citation>
    <scope>GENOME REANNOTATION</scope>
    <source>
        <strain>cv. Columbia</strain>
    </source>
</reference>
<reference key="4">
    <citation type="journal article" date="2002" name="Science">
        <title>Functional annotation of a full-length Arabidopsis cDNA collection.</title>
        <authorList>
            <person name="Seki M."/>
            <person name="Narusaka M."/>
            <person name="Kamiya A."/>
            <person name="Ishida J."/>
            <person name="Satou M."/>
            <person name="Sakurai T."/>
            <person name="Nakajima M."/>
            <person name="Enju A."/>
            <person name="Akiyama K."/>
            <person name="Oono Y."/>
            <person name="Muramatsu M."/>
            <person name="Hayashizaki Y."/>
            <person name="Kawai J."/>
            <person name="Carninci P."/>
            <person name="Itoh M."/>
            <person name="Ishii Y."/>
            <person name="Arakawa T."/>
            <person name="Shibata K."/>
            <person name="Shinagawa A."/>
            <person name="Shinozaki K."/>
        </authorList>
    </citation>
    <scope>NUCLEOTIDE SEQUENCE [LARGE SCALE MRNA]</scope>
    <source>
        <strain>cv. Columbia</strain>
    </source>
</reference>
<reference key="5">
    <citation type="journal article" date="2003" name="Science">
        <title>Empirical analysis of transcriptional activity in the Arabidopsis genome.</title>
        <authorList>
            <person name="Yamada K."/>
            <person name="Lim J."/>
            <person name="Dale J.M."/>
            <person name="Chen H."/>
            <person name="Shinn P."/>
            <person name="Palm C.J."/>
            <person name="Southwick A.M."/>
            <person name="Wu H.C."/>
            <person name="Kim C.J."/>
            <person name="Nguyen M."/>
            <person name="Pham P.K."/>
            <person name="Cheuk R.F."/>
            <person name="Karlin-Newmann G."/>
            <person name="Liu S.X."/>
            <person name="Lam B."/>
            <person name="Sakano H."/>
            <person name="Wu T."/>
            <person name="Yu G."/>
            <person name="Miranda M."/>
            <person name="Quach H.L."/>
            <person name="Tripp M."/>
            <person name="Chang C.H."/>
            <person name="Lee J.M."/>
            <person name="Toriumi M.J."/>
            <person name="Chan M.M."/>
            <person name="Tang C.C."/>
            <person name="Onodera C.S."/>
            <person name="Deng J.M."/>
            <person name="Akiyama K."/>
            <person name="Ansari Y."/>
            <person name="Arakawa T."/>
            <person name="Banh J."/>
            <person name="Banno F."/>
            <person name="Bowser L."/>
            <person name="Brooks S.Y."/>
            <person name="Carninci P."/>
            <person name="Chao Q."/>
            <person name="Choy N."/>
            <person name="Enju A."/>
            <person name="Goldsmith A.D."/>
            <person name="Gurjal M."/>
            <person name="Hansen N.F."/>
            <person name="Hayashizaki Y."/>
            <person name="Johnson-Hopson C."/>
            <person name="Hsuan V.W."/>
            <person name="Iida K."/>
            <person name="Karnes M."/>
            <person name="Khan S."/>
            <person name="Koesema E."/>
            <person name="Ishida J."/>
            <person name="Jiang P.X."/>
            <person name="Jones T."/>
            <person name="Kawai J."/>
            <person name="Kamiya A."/>
            <person name="Meyers C."/>
            <person name="Nakajima M."/>
            <person name="Narusaka M."/>
            <person name="Seki M."/>
            <person name="Sakurai T."/>
            <person name="Satou M."/>
            <person name="Tamse R."/>
            <person name="Vaysberg M."/>
            <person name="Wallender E.K."/>
            <person name="Wong C."/>
            <person name="Yamamura Y."/>
            <person name="Yuan S."/>
            <person name="Shinozaki K."/>
            <person name="Davis R.W."/>
            <person name="Theologis A."/>
            <person name="Ecker J.R."/>
        </authorList>
    </citation>
    <scope>NUCLEOTIDE SEQUENCE [LARGE SCALE MRNA]</scope>
    <source>
        <strain>cv. Columbia</strain>
    </source>
</reference>
<reference key="6">
    <citation type="journal article" date="2003" name="Plant Biotechnol. J.">
        <title>Expression of the Arabidopsis ADS1 gene in Brassica juncea results in a decreased level of total saturated fatty acids.</title>
        <authorList>
            <person name="Yao K."/>
            <person name="Bacchetto R.G."/>
            <person name="Lockhart K.M."/>
            <person name="Friesen L.J."/>
            <person name="Potts D.A."/>
            <person name="Covello P.S."/>
            <person name="Taylor D.C."/>
        </authorList>
    </citation>
    <scope>FUNCTION</scope>
</reference>
<reference key="7">
    <citation type="journal article" date="2004" name="Proc. Natl. Acad. Sci. U.S.A.">
        <title>Switching desaturase enzyme specificity by alternate subcellular targeting.</title>
        <authorList>
            <person name="Heilmann I."/>
            <person name="Pidkowich M.S."/>
            <person name="Girke T."/>
            <person name="Shanklin J."/>
        </authorList>
    </citation>
    <scope>FUNCTION</scope>
    <scope>CATALYTIC ACTIVITY</scope>
    <scope>SPECIFICITY</scope>
</reference>
<reference key="8">
    <citation type="journal article" date="2013" name="Plant Physiol.">
        <title>Involvement of Arabidopsis ACYL-COENZYME A DESATURASE-LIKE2 (At2g31360) in the biosynthesis of the very-long-chain monounsaturated fatty acid components of membrane lipids.</title>
        <authorList>
            <person name="Smith M.A."/>
            <person name="Dauk M."/>
            <person name="Ramadan H."/>
            <person name="Yang H."/>
            <person name="Seamons L.E."/>
            <person name="Haslam R.P."/>
            <person name="Beaudoin F."/>
            <person name="Ramirez-Erosa I."/>
            <person name="Forseille L."/>
        </authorList>
    </citation>
    <scope>FUNCTION</scope>
    <scope>SUBCELLULAR LOCATION</scope>
</reference>
<reference key="9">
    <citation type="journal article" date="2016" name="Physiol. Plantarum">
        <title>Acyl-lipid desaturase 1 primes cold acclimation response in Arabidopsis.</title>
        <authorList>
            <person name="Chen M."/>
            <person name="Thelen J.J."/>
        </authorList>
    </citation>
    <scope>FUNCTION</scope>
    <scope>SUBCELLULAR LOCATION</scope>
    <scope>DISRUPTION PHENOTYPE</scope>
</reference>
<comment type="function">
    <text evidence="4 5 6 7 12">Involved in delta-9 desaturation of fatty acids (Probable) (PubMed:15240892, PubMed:17156034). Involved in the production of very-long-chain fatty acids (VLCFAs) (PubMed:23175755). May desaturate chloroplastic monogalactosyl diacylglycerol (MGDG) and alter chloroplast membrane fluidity, which is required to prime a cold acclimation response (PubMed:27062193).</text>
</comment>
<comment type="cofactor">
    <cofactor evidence="1">
        <name>Fe cation</name>
        <dbReference type="ChEBI" id="CHEBI:24875"/>
    </cofactor>
</comment>
<comment type="pathway">
    <text evidence="10">Lipid metabolism; polyunsaturated fatty acid biosynthesis.</text>
</comment>
<comment type="subcellular location">
    <subcellularLocation>
        <location evidence="6">Endoplasmic reticulum membrane</location>
        <topology evidence="2">Multi-pass membrane protein</topology>
    </subcellularLocation>
    <subcellularLocation>
        <location evidence="11">Plastid</location>
        <location evidence="11">Chloroplast membrane</location>
        <topology evidence="2">Multi-pass membrane protein</topology>
    </subcellularLocation>
</comment>
<comment type="tissue specificity">
    <text evidence="8">Strongly expressed in inflorescence meristems, leaves, and flowers, and weakly in roots and seedpods.</text>
</comment>
<comment type="induction">
    <text evidence="8">Down-regulated by cold.</text>
</comment>
<comment type="domain">
    <text evidence="1">The histidine box domains may contain the active site and/or be involved in metal ion binding.</text>
</comment>
<comment type="disruption phenotype">
    <text evidence="7">No visible phenotype under normal growth conditions, but mutant plants display enhanced freezing tolerance upon cold acclimation.</text>
</comment>
<comment type="miscellaneous">
    <text evidence="4">Substrate specificity shifts from delta-9 to delta-7 desaturation when the protein is retargeted to the chloroplast.</text>
</comment>
<comment type="similarity">
    <text evidence="10">Belongs to the fatty acid desaturase type 1 family.</text>
</comment>
<protein>
    <recommendedName>
        <fullName evidence="9">Delta-9 acyl-lipid desaturase 1</fullName>
        <ecNumber evidence="4">1.14.19.-</ecNumber>
    </recommendedName>
</protein>